<name>METAS_PECCP</name>
<organism>
    <name type="scientific">Pectobacterium carotovorum subsp. carotovorum (strain PC1)</name>
    <dbReference type="NCBI Taxonomy" id="561230"/>
    <lineage>
        <taxon>Bacteria</taxon>
        <taxon>Pseudomonadati</taxon>
        <taxon>Pseudomonadota</taxon>
        <taxon>Gammaproteobacteria</taxon>
        <taxon>Enterobacterales</taxon>
        <taxon>Pectobacteriaceae</taxon>
        <taxon>Pectobacterium</taxon>
    </lineage>
</organism>
<keyword id="KW-0012">Acyltransferase</keyword>
<keyword id="KW-0028">Amino-acid biosynthesis</keyword>
<keyword id="KW-0963">Cytoplasm</keyword>
<keyword id="KW-0486">Methionine biosynthesis</keyword>
<keyword id="KW-0808">Transferase</keyword>
<accession>C6DFQ6</accession>
<proteinExistence type="inferred from homology"/>
<dbReference type="EC" id="2.3.1.46" evidence="1"/>
<dbReference type="EMBL" id="CP001657">
    <property type="protein sequence ID" value="ACT14795.1"/>
    <property type="molecule type" value="Genomic_DNA"/>
</dbReference>
<dbReference type="SMR" id="C6DFQ6"/>
<dbReference type="STRING" id="561230.PC1_3780"/>
<dbReference type="KEGG" id="pct:PC1_3780"/>
<dbReference type="eggNOG" id="COG1897">
    <property type="taxonomic scope" value="Bacteria"/>
</dbReference>
<dbReference type="HOGENOM" id="CLU_057851_0_1_6"/>
<dbReference type="OrthoDB" id="9772423at2"/>
<dbReference type="UniPathway" id="UPA00051">
    <property type="reaction ID" value="UER00075"/>
</dbReference>
<dbReference type="Proteomes" id="UP000002736">
    <property type="component" value="Chromosome"/>
</dbReference>
<dbReference type="GO" id="GO:0005737">
    <property type="term" value="C:cytoplasm"/>
    <property type="evidence" value="ECO:0007669"/>
    <property type="project" value="UniProtKB-SubCell"/>
</dbReference>
<dbReference type="GO" id="GO:0004414">
    <property type="term" value="F:homoserine O-acetyltransferase activity"/>
    <property type="evidence" value="ECO:0007669"/>
    <property type="project" value="UniProtKB-UniRule"/>
</dbReference>
<dbReference type="GO" id="GO:0008899">
    <property type="term" value="F:homoserine O-succinyltransferase activity"/>
    <property type="evidence" value="ECO:0007669"/>
    <property type="project" value="UniProtKB-EC"/>
</dbReference>
<dbReference type="GO" id="GO:0019281">
    <property type="term" value="P:L-methionine biosynthetic process from homoserine via O-succinyl-L-homoserine and cystathionine"/>
    <property type="evidence" value="ECO:0007669"/>
    <property type="project" value="InterPro"/>
</dbReference>
<dbReference type="CDD" id="cd03131">
    <property type="entry name" value="GATase1_HTS"/>
    <property type="match status" value="1"/>
</dbReference>
<dbReference type="FunFam" id="3.40.50.880:FF:000004">
    <property type="entry name" value="Homoserine O-succinyltransferase"/>
    <property type="match status" value="1"/>
</dbReference>
<dbReference type="Gene3D" id="3.40.50.880">
    <property type="match status" value="1"/>
</dbReference>
<dbReference type="HAMAP" id="MF_00295">
    <property type="entry name" value="MetA_acyltransf"/>
    <property type="match status" value="1"/>
</dbReference>
<dbReference type="InterPro" id="IPR029062">
    <property type="entry name" value="Class_I_gatase-like"/>
</dbReference>
<dbReference type="InterPro" id="IPR005697">
    <property type="entry name" value="HST_MetA"/>
</dbReference>
<dbReference type="InterPro" id="IPR033752">
    <property type="entry name" value="MetA_family"/>
</dbReference>
<dbReference type="NCBIfam" id="TIGR01001">
    <property type="entry name" value="metA"/>
    <property type="match status" value="1"/>
</dbReference>
<dbReference type="PANTHER" id="PTHR20919">
    <property type="entry name" value="HOMOSERINE O-SUCCINYLTRANSFERASE"/>
    <property type="match status" value="1"/>
</dbReference>
<dbReference type="PANTHER" id="PTHR20919:SF0">
    <property type="entry name" value="HOMOSERINE O-SUCCINYLTRANSFERASE"/>
    <property type="match status" value="1"/>
</dbReference>
<dbReference type="Pfam" id="PF04204">
    <property type="entry name" value="HTS"/>
    <property type="match status" value="1"/>
</dbReference>
<dbReference type="PIRSF" id="PIRSF000450">
    <property type="entry name" value="H_ser_succinyltr"/>
    <property type="match status" value="1"/>
</dbReference>
<dbReference type="SUPFAM" id="SSF52317">
    <property type="entry name" value="Class I glutamine amidotransferase-like"/>
    <property type="match status" value="1"/>
</dbReference>
<reference key="1">
    <citation type="submission" date="2009-07" db="EMBL/GenBank/DDBJ databases">
        <title>Complete sequence of Pectobacterium carotovorum subsp. carotovorum PC1.</title>
        <authorList>
            <consortium name="US DOE Joint Genome Institute"/>
            <person name="Lucas S."/>
            <person name="Copeland A."/>
            <person name="Lapidus A."/>
            <person name="Glavina del Rio T."/>
            <person name="Tice H."/>
            <person name="Bruce D."/>
            <person name="Goodwin L."/>
            <person name="Pitluck S."/>
            <person name="Munk A.C."/>
            <person name="Brettin T."/>
            <person name="Detter J.C."/>
            <person name="Han C."/>
            <person name="Tapia R."/>
            <person name="Larimer F."/>
            <person name="Land M."/>
            <person name="Hauser L."/>
            <person name="Kyrpides N."/>
            <person name="Mikhailova N."/>
            <person name="Balakrishnan V."/>
            <person name="Glasner J."/>
            <person name="Perna N.T."/>
        </authorList>
    </citation>
    <scope>NUCLEOTIDE SEQUENCE [LARGE SCALE GENOMIC DNA]</scope>
    <source>
        <strain>PC1</strain>
    </source>
</reference>
<gene>
    <name evidence="1" type="primary">metAS</name>
    <name type="ordered locus">PC1_3780</name>
</gene>
<sequence>MPIRVPDELPAVNFLRNENVFVMTSSRAKTQEIRPLKVLVLNLMPKKIETENQFLRLLSNSPLQIDIQLLRIDSRESKNTPAEHLNNFYCDFDDIQNDNFDGLIVTGAPLGLVDFCDVVYWPQIARVIEWAKEHVTSTLFVCWAVQAALNILYGIPKMTRKEKLSGVYSHQTLQPHALLTRGFDETFLAPHSRYADFPVDVIRQYTDLDILVESEQAGAYLFASKDKRLAFVTGHPEYDALTLAGEFFRDYDAGLDPAVPVNYFPDDNPELAPKASWRSHGHLLFVNWLNYYVYQITPYDLRRMNPTLD</sequence>
<protein>
    <recommendedName>
        <fullName evidence="1">Homoserine O-succinyltransferase</fullName>
        <shortName evidence="1">HST</shortName>
        <ecNumber evidence="1">2.3.1.46</ecNumber>
    </recommendedName>
    <alternativeName>
        <fullName evidence="1">Homoserine transsuccinylase</fullName>
        <shortName evidence="1">HTS</shortName>
    </alternativeName>
</protein>
<feature type="chain" id="PRO_1000204924" description="Homoserine O-succinyltransferase">
    <location>
        <begin position="1"/>
        <end position="309"/>
    </location>
</feature>
<feature type="active site" description="Acyl-thioester intermediate" evidence="1">
    <location>
        <position position="142"/>
    </location>
</feature>
<feature type="active site" description="Proton acceptor" evidence="1">
    <location>
        <position position="235"/>
    </location>
</feature>
<feature type="active site" evidence="1">
    <location>
        <position position="237"/>
    </location>
</feature>
<feature type="binding site" evidence="1">
    <location>
        <position position="163"/>
    </location>
    <ligand>
        <name>substrate</name>
    </ligand>
</feature>
<feature type="binding site" evidence="1">
    <location>
        <position position="192"/>
    </location>
    <ligand>
        <name>substrate</name>
    </ligand>
</feature>
<feature type="binding site" evidence="1">
    <location>
        <position position="249"/>
    </location>
    <ligand>
        <name>substrate</name>
    </ligand>
</feature>
<feature type="site" description="Important for acyl-CoA specificity" evidence="1">
    <location>
        <position position="111"/>
    </location>
</feature>
<feature type="site" description="Important for substrate specificity" evidence="1">
    <location>
        <position position="192"/>
    </location>
</feature>
<comment type="function">
    <text evidence="1">Transfers a succinyl group from succinyl-CoA to L-homoserine, forming succinyl-L-homoserine.</text>
</comment>
<comment type="catalytic activity">
    <reaction evidence="1">
        <text>L-homoserine + succinyl-CoA = O-succinyl-L-homoserine + CoA</text>
        <dbReference type="Rhea" id="RHEA:22008"/>
        <dbReference type="ChEBI" id="CHEBI:57287"/>
        <dbReference type="ChEBI" id="CHEBI:57292"/>
        <dbReference type="ChEBI" id="CHEBI:57476"/>
        <dbReference type="ChEBI" id="CHEBI:57661"/>
        <dbReference type="EC" id="2.3.1.46"/>
    </reaction>
</comment>
<comment type="pathway">
    <text evidence="1">Amino-acid biosynthesis; L-methionine biosynthesis via de novo pathway; O-succinyl-L-homoserine from L-homoserine: step 1/1.</text>
</comment>
<comment type="subcellular location">
    <subcellularLocation>
        <location evidence="1">Cytoplasm</location>
    </subcellularLocation>
</comment>
<comment type="similarity">
    <text evidence="1">Belongs to the MetA family.</text>
</comment>
<evidence type="ECO:0000255" key="1">
    <source>
        <dbReference type="HAMAP-Rule" id="MF_00295"/>
    </source>
</evidence>